<accession>Q8NGT9</accession>
<accession>Q6IF44</accession>
<accession>Q96R46</accession>
<name>OR2A1_HUMAN</name>
<proteinExistence type="inferred from homology"/>
<dbReference type="EMBL" id="AB065692">
    <property type="protein sequence ID" value="BAC05915.1"/>
    <property type="status" value="ALT_INIT"/>
    <property type="molecule type" value="Genomic_DNA"/>
</dbReference>
<dbReference type="EMBL" id="AF399597">
    <property type="protein sequence ID" value="AAK95082.1"/>
    <property type="molecule type" value="Genomic_DNA"/>
</dbReference>
<dbReference type="EMBL" id="BK004217">
    <property type="protein sequence ID" value="DAA04615.1"/>
    <property type="molecule type" value="Genomic_DNA"/>
</dbReference>
<dbReference type="EMBL" id="BK004418">
    <property type="protein sequence ID" value="DAA04816.1"/>
    <property type="molecule type" value="Genomic_DNA"/>
</dbReference>
<dbReference type="CCDS" id="CCDS43673.1"/>
<dbReference type="CCDS" id="CCDS56515.1"/>
<dbReference type="RefSeq" id="NP_001001802.2">
    <property type="nucleotide sequence ID" value="NM_001001802.2"/>
</dbReference>
<dbReference type="RefSeq" id="NP_001005287.1">
    <property type="nucleotide sequence ID" value="NM_001005287.2"/>
</dbReference>
<dbReference type="RefSeq" id="XP_047276279.1">
    <property type="nucleotide sequence ID" value="XM_047420323.1"/>
</dbReference>
<dbReference type="SMR" id="Q8NGT9"/>
<dbReference type="FunCoup" id="Q8NGT9">
    <property type="interactions" value="538"/>
</dbReference>
<dbReference type="STRING" id="9606.ENSP00000493333"/>
<dbReference type="GlyCosmos" id="Q8NGT9">
    <property type="glycosylation" value="1 site, No reported glycans"/>
</dbReference>
<dbReference type="GlyGen" id="Q8NGT9">
    <property type="glycosylation" value="1 site"/>
</dbReference>
<dbReference type="iPTMnet" id="Q8NGT9"/>
<dbReference type="PhosphoSitePlus" id="Q8NGT9"/>
<dbReference type="BioMuta" id="OR2A42"/>
<dbReference type="DMDM" id="38372771"/>
<dbReference type="MassIVE" id="Q8NGT9"/>
<dbReference type="PaxDb" id="9606-ENSP00000375334"/>
<dbReference type="PeptideAtlas" id="Q8NGT9"/>
<dbReference type="Antibodypedia" id="32713">
    <property type="antibodies" value="69 antibodies from 17 providers"/>
</dbReference>
<dbReference type="Antibodypedia" id="72718">
    <property type="antibodies" value="29 antibodies from 6 providers"/>
</dbReference>
<dbReference type="DNASU" id="402317"/>
<dbReference type="Ensembl" id="ENST00000641044.2">
    <property type="protein sequence ID" value="ENSP00000493454.1"/>
    <property type="gene ID" value="ENSG00000221970.4"/>
</dbReference>
<dbReference type="Ensembl" id="ENST00000641810.1">
    <property type="protein sequence ID" value="ENSP00000493333.1"/>
    <property type="gene ID" value="ENSG00000212807.3"/>
</dbReference>
<dbReference type="GeneID" id="346528"/>
<dbReference type="GeneID" id="402317"/>
<dbReference type="KEGG" id="hsa:346528"/>
<dbReference type="KEGG" id="hsa:402317"/>
<dbReference type="MANE-Select" id="ENST00000641044.2">
    <property type="protein sequence ID" value="ENSP00000493454.1"/>
    <property type="RefSeq nucleotide sequence ID" value="NM_001005287.2"/>
    <property type="RefSeq protein sequence ID" value="NP_001005287.1"/>
</dbReference>
<dbReference type="MANE-Select" id="ENST00000641810.1">
    <property type="protein sequence ID" value="ENSP00000493333.1"/>
    <property type="RefSeq nucleotide sequence ID" value="NM_001001802.3"/>
    <property type="RefSeq protein sequence ID" value="NP_001001802.2"/>
</dbReference>
<dbReference type="UCSC" id="uc011kub.2">
    <property type="organism name" value="human"/>
</dbReference>
<dbReference type="AGR" id="HGNC:31230"/>
<dbReference type="AGR" id="HGNC:8229"/>
<dbReference type="CTD" id="346528"/>
<dbReference type="CTD" id="402317"/>
<dbReference type="DisGeNET" id="346528"/>
<dbReference type="GeneCards" id="OR2A1"/>
<dbReference type="GeneCards" id="OR2A42"/>
<dbReference type="HGNC" id="HGNC:8229">
    <property type="gene designation" value="OR2A1"/>
</dbReference>
<dbReference type="HGNC" id="HGNC:31230">
    <property type="gene designation" value="OR2A42"/>
</dbReference>
<dbReference type="HPA" id="ENSG00000212807">
    <property type="expression patterns" value="Not detected"/>
</dbReference>
<dbReference type="HPA" id="ENSG00000221970">
    <property type="expression patterns" value="Tissue enhanced (thyroid)"/>
</dbReference>
<dbReference type="neXtProt" id="NX_Q8NGT9"/>
<dbReference type="OpenTargets" id="ENSG00000212807"/>
<dbReference type="PharmGKB" id="PA134971566"/>
<dbReference type="VEuPathDB" id="HostDB:ENSG00000212807"/>
<dbReference type="VEuPathDB" id="HostDB:ENSG00000221970"/>
<dbReference type="eggNOG" id="ENOG502SIA2">
    <property type="taxonomic scope" value="Eukaryota"/>
</dbReference>
<dbReference type="GeneTree" id="ENSGT00940000153255"/>
<dbReference type="HOGENOM" id="CLU_012526_1_2_1"/>
<dbReference type="InParanoid" id="Q8NGT9"/>
<dbReference type="OMA" id="CAIQMHI"/>
<dbReference type="OrthoDB" id="6147321at2759"/>
<dbReference type="PAN-GO" id="Q8NGT9">
    <property type="GO annotations" value="0 GO annotations based on evolutionary models"/>
</dbReference>
<dbReference type="PhylomeDB" id="Q8NGT9"/>
<dbReference type="TreeFam" id="TF337251"/>
<dbReference type="PathwayCommons" id="Q8NGT9"/>
<dbReference type="Reactome" id="R-HSA-381753">
    <property type="pathway name" value="Olfactory Signaling Pathway"/>
</dbReference>
<dbReference type="Reactome" id="R-HSA-9752946">
    <property type="pathway name" value="Expression and translocation of olfactory receptors"/>
</dbReference>
<dbReference type="BioGRID-ORCS" id="346528">
    <property type="hits" value="61 hits in 640 CRISPR screens"/>
</dbReference>
<dbReference type="BioGRID-ORCS" id="402317">
    <property type="hits" value="3 hits in 265 CRISPR screens"/>
</dbReference>
<dbReference type="GeneWiki" id="OR2A1"/>
<dbReference type="Pharos" id="Q8NGT9">
    <property type="development level" value="Tdark"/>
</dbReference>
<dbReference type="PRO" id="PR:Q8NGT9"/>
<dbReference type="Proteomes" id="UP000005640">
    <property type="component" value="Chromosome 7"/>
</dbReference>
<dbReference type="RNAct" id="Q8NGT9">
    <property type="molecule type" value="protein"/>
</dbReference>
<dbReference type="Bgee" id="ENSG00000212807">
    <property type="expression patterns" value="Expressed in sural nerve and 74 other cell types or tissues"/>
</dbReference>
<dbReference type="GO" id="GO:0005886">
    <property type="term" value="C:plasma membrane"/>
    <property type="evidence" value="ECO:0000318"/>
    <property type="project" value="GO_Central"/>
</dbReference>
<dbReference type="GO" id="GO:0004930">
    <property type="term" value="F:G protein-coupled receptor activity"/>
    <property type="evidence" value="ECO:0007669"/>
    <property type="project" value="UniProtKB-KW"/>
</dbReference>
<dbReference type="GO" id="GO:0004984">
    <property type="term" value="F:olfactory receptor activity"/>
    <property type="evidence" value="ECO:0000318"/>
    <property type="project" value="GO_Central"/>
</dbReference>
<dbReference type="GO" id="GO:0050911">
    <property type="term" value="P:detection of chemical stimulus involved in sensory perception of smell"/>
    <property type="evidence" value="ECO:0000318"/>
    <property type="project" value="GO_Central"/>
</dbReference>
<dbReference type="CDD" id="cd15420">
    <property type="entry name" value="7tmA_OR2A-like"/>
    <property type="match status" value="1"/>
</dbReference>
<dbReference type="FunFam" id="1.20.1070.10:FF:000008">
    <property type="entry name" value="Olfactory receptor"/>
    <property type="match status" value="1"/>
</dbReference>
<dbReference type="Gene3D" id="1.20.1070.10">
    <property type="entry name" value="Rhodopsin 7-helix transmembrane proteins"/>
    <property type="match status" value="1"/>
</dbReference>
<dbReference type="InterPro" id="IPR000276">
    <property type="entry name" value="GPCR_Rhodpsn"/>
</dbReference>
<dbReference type="InterPro" id="IPR017452">
    <property type="entry name" value="GPCR_Rhodpsn_7TM"/>
</dbReference>
<dbReference type="InterPro" id="IPR000725">
    <property type="entry name" value="Olfact_rcpt"/>
</dbReference>
<dbReference type="PANTHER" id="PTHR26453">
    <property type="entry name" value="OLFACTORY RECEPTOR"/>
    <property type="match status" value="1"/>
</dbReference>
<dbReference type="Pfam" id="PF13853">
    <property type="entry name" value="7tm_4"/>
    <property type="match status" value="1"/>
</dbReference>
<dbReference type="PRINTS" id="PR00237">
    <property type="entry name" value="GPCRRHODOPSN"/>
</dbReference>
<dbReference type="PRINTS" id="PR00245">
    <property type="entry name" value="OLFACTORYR"/>
</dbReference>
<dbReference type="SUPFAM" id="SSF81321">
    <property type="entry name" value="Family A G protein-coupled receptor-like"/>
    <property type="match status" value="1"/>
</dbReference>
<dbReference type="PROSITE" id="PS00237">
    <property type="entry name" value="G_PROTEIN_RECEP_F1_1"/>
    <property type="match status" value="1"/>
</dbReference>
<dbReference type="PROSITE" id="PS50262">
    <property type="entry name" value="G_PROTEIN_RECEP_F1_2"/>
    <property type="match status" value="1"/>
</dbReference>
<reference key="1">
    <citation type="submission" date="2001-07" db="EMBL/GenBank/DDBJ databases">
        <title>Genome-wide discovery and analysis of human seven transmembrane helix receptor genes.</title>
        <authorList>
            <person name="Suwa M."/>
            <person name="Sato T."/>
            <person name="Okouchi I."/>
            <person name="Arita M."/>
            <person name="Futami K."/>
            <person name="Matsumoto S."/>
            <person name="Tsutsumi S."/>
            <person name="Aburatani H."/>
            <person name="Asai K."/>
            <person name="Akiyama Y."/>
        </authorList>
    </citation>
    <scope>NUCLEOTIDE SEQUENCE [GENOMIC DNA]</scope>
</reference>
<reference key="2">
    <citation type="journal article" date="2002" name="Genomics">
        <title>DEFOG: a practical scheme for deciphering families of genes.</title>
        <authorList>
            <person name="Fuchs T."/>
            <person name="Malecova B."/>
            <person name="Linhart C."/>
            <person name="Sharan R."/>
            <person name="Khen M."/>
            <person name="Herwig R."/>
            <person name="Shmulevich D."/>
            <person name="Elkon R."/>
            <person name="Steinfath M."/>
            <person name="O'Brien J.K."/>
            <person name="Radelof U."/>
            <person name="Lehrach H."/>
            <person name="Lancet D."/>
            <person name="Shamir R."/>
        </authorList>
    </citation>
    <scope>NUCLEOTIDE SEQUENCE [GENOMIC DNA] OF 67-283</scope>
</reference>
<reference key="3">
    <citation type="journal article" date="2004" name="Proc. Natl. Acad. Sci. U.S.A.">
        <title>The human olfactory receptor gene family.</title>
        <authorList>
            <person name="Malnic B."/>
            <person name="Godfrey P.A."/>
            <person name="Buck L.B."/>
        </authorList>
    </citation>
    <scope>IDENTIFICATION</scope>
</reference>
<reference key="4">
    <citation type="journal article" date="2004" name="Proc. Natl. Acad. Sci. U.S.A.">
        <authorList>
            <person name="Malnic B."/>
            <person name="Godfrey P.A."/>
            <person name="Buck L.B."/>
        </authorList>
    </citation>
    <scope>ERRATUM OF PUBMED:14983052</scope>
</reference>
<comment type="function">
    <text evidence="3">Odorant receptor.</text>
</comment>
<comment type="subcellular location">
    <subcellularLocation>
        <location>Cell membrane</location>
        <topology>Multi-pass membrane protein</topology>
    </subcellularLocation>
</comment>
<comment type="similarity">
    <text evidence="2">Belongs to the G-protein coupled receptor 1 family.</text>
</comment>
<comment type="sequence caution" evidence="3">
    <conflict type="erroneous initiation">
        <sequence resource="EMBL-CDS" id="BAC05915"/>
    </conflict>
</comment>
<comment type="online information" name="Human Olfactory Receptor Data Exploratorium (HORDE)">
    <link uri="http://genome.weizmann.ac.il/horde/card/index/symbol:OR2A1"/>
</comment>
<comment type="online information" name="Human Olfactory Receptor Data Exploratorium (HORDE)">
    <link uri="https://genome.weizmann.ac.il/horde/card/index/symbol:OR2A1/term:OR2A1/type:keyword"/>
</comment>
<evidence type="ECO:0000255" key="1"/>
<evidence type="ECO:0000255" key="2">
    <source>
        <dbReference type="PROSITE-ProRule" id="PRU00521"/>
    </source>
</evidence>
<evidence type="ECO:0000305" key="3"/>
<gene>
    <name type="primary">OR2A1</name>
</gene>
<gene>
    <name type="primary">OR2A42</name>
</gene>
<feature type="chain" id="PRO_0000150459" description="Olfactory receptor 2A1/2A42">
    <location>
        <begin position="1"/>
        <end position="310"/>
    </location>
</feature>
<feature type="topological domain" description="Extracellular" evidence="1">
    <location>
        <begin position="1"/>
        <end position="24"/>
    </location>
</feature>
<feature type="transmembrane region" description="Helical; Name=1" evidence="1">
    <location>
        <begin position="25"/>
        <end position="48"/>
    </location>
</feature>
<feature type="topological domain" description="Cytoplasmic" evidence="1">
    <location>
        <begin position="49"/>
        <end position="56"/>
    </location>
</feature>
<feature type="transmembrane region" description="Helical; Name=2" evidence="1">
    <location>
        <begin position="57"/>
        <end position="78"/>
    </location>
</feature>
<feature type="topological domain" description="Extracellular" evidence="1">
    <location>
        <begin position="79"/>
        <end position="99"/>
    </location>
</feature>
<feature type="transmembrane region" description="Helical; Name=3" evidence="1">
    <location>
        <begin position="100"/>
        <end position="119"/>
    </location>
</feature>
<feature type="topological domain" description="Cytoplasmic" evidence="1">
    <location>
        <begin position="120"/>
        <end position="138"/>
    </location>
</feature>
<feature type="transmembrane region" description="Helical; Name=4" evidence="1">
    <location>
        <begin position="139"/>
        <end position="157"/>
    </location>
</feature>
<feature type="topological domain" description="Extracellular" evidence="1">
    <location>
        <begin position="158"/>
        <end position="195"/>
    </location>
</feature>
<feature type="transmembrane region" description="Helical; Name=5" evidence="1">
    <location>
        <begin position="196"/>
        <end position="218"/>
    </location>
</feature>
<feature type="topological domain" description="Cytoplasmic" evidence="1">
    <location>
        <begin position="219"/>
        <end position="235"/>
    </location>
</feature>
<feature type="transmembrane region" description="Helical; Name=6" evidence="1">
    <location>
        <begin position="236"/>
        <end position="258"/>
    </location>
</feature>
<feature type="topological domain" description="Extracellular" evidence="1">
    <location>
        <begin position="259"/>
        <end position="271"/>
    </location>
</feature>
<feature type="transmembrane region" description="Helical; Name=7" evidence="1">
    <location>
        <begin position="272"/>
        <end position="291"/>
    </location>
</feature>
<feature type="topological domain" description="Cytoplasmic" evidence="1">
    <location>
        <begin position="292"/>
        <end position="310"/>
    </location>
</feature>
<feature type="glycosylation site" description="N-linked (GlcNAc...) asparagine" evidence="1">
    <location>
        <position position="4"/>
    </location>
</feature>
<feature type="disulfide bond" evidence="2">
    <location>
        <begin position="96"/>
        <end position="188"/>
    </location>
</feature>
<protein>
    <recommendedName>
        <fullName>Olfactory receptor 2A1/2A42</fullName>
    </recommendedName>
    <alternativeName>
        <fullName>Olfactory receptor OR7-16</fullName>
    </alternativeName>
    <alternativeName>
        <fullName>Olfactory receptor OR7-19</fullName>
    </alternativeName>
</protein>
<keyword id="KW-1003">Cell membrane</keyword>
<keyword id="KW-1015">Disulfide bond</keyword>
<keyword id="KW-0297">G-protein coupled receptor</keyword>
<keyword id="KW-0325">Glycoprotein</keyword>
<keyword id="KW-0472">Membrane</keyword>
<keyword id="KW-0552">Olfaction</keyword>
<keyword id="KW-0675">Receptor</keyword>
<keyword id="KW-1185">Reference proteome</keyword>
<keyword id="KW-0716">Sensory transduction</keyword>
<keyword id="KW-0807">Transducer</keyword>
<keyword id="KW-0812">Transmembrane</keyword>
<keyword id="KW-1133">Transmembrane helix</keyword>
<sequence length="310" mass="34714">MGENQTMVTEFLLLGFLLGPRIQMLLFGLFSLFYIFTLLGNGAILGLISLDSRLHTPMYFFLSHLAVVDIAYTRNTVPQMLANLLHPAKPISFAGCMTQTFLCLSFGHSECLLLVLMSYDRYVAICHPLRYSVIMTWRVCITLAVTSWTCGSLLALAHVVLILRLPFSGPHEINHFFCEILSVLRLACADTWLNQVVIFAACVFFLVGPPSLVLVSYSHILAAILRIQSGEGRRKAFSTCSSHLCVVGLFFGSAIIMYMAPKSRHPEEQQKVFFLFYSFFNPTLNPLIYSLRNGEVKGALRRALGKESHS</sequence>
<organism>
    <name type="scientific">Homo sapiens</name>
    <name type="common">Human</name>
    <dbReference type="NCBI Taxonomy" id="9606"/>
    <lineage>
        <taxon>Eukaryota</taxon>
        <taxon>Metazoa</taxon>
        <taxon>Chordata</taxon>
        <taxon>Craniata</taxon>
        <taxon>Vertebrata</taxon>
        <taxon>Euteleostomi</taxon>
        <taxon>Mammalia</taxon>
        <taxon>Eutheria</taxon>
        <taxon>Euarchontoglires</taxon>
        <taxon>Primates</taxon>
        <taxon>Haplorrhini</taxon>
        <taxon>Catarrhini</taxon>
        <taxon>Hominidae</taxon>
        <taxon>Homo</taxon>
    </lineage>
</organism>